<proteinExistence type="inferred from homology"/>
<evidence type="ECO:0000255" key="1">
    <source>
        <dbReference type="HAMAP-Rule" id="MF_00438"/>
    </source>
</evidence>
<keyword id="KW-0150">Chloroplast</keyword>
<keyword id="KW-0472">Membrane</keyword>
<keyword id="KW-0602">Photosynthesis</keyword>
<keyword id="KW-0604">Photosystem II</keyword>
<keyword id="KW-0934">Plastid</keyword>
<keyword id="KW-0674">Reaction center</keyword>
<keyword id="KW-0793">Thylakoid</keyword>
<keyword id="KW-0812">Transmembrane</keyword>
<keyword id="KW-1133">Transmembrane helix</keyword>
<protein>
    <recommendedName>
        <fullName evidence="1">Photosystem II reaction center protein M</fullName>
        <shortName evidence="1">PSII-M</shortName>
    </recommendedName>
</protein>
<name>PSBM_TETOB</name>
<accession>Q1KVS8</accession>
<geneLocation type="chloroplast"/>
<feature type="chain" id="PRO_0000276254" description="Photosystem II reaction center protein M">
    <location>
        <begin position="1"/>
        <end position="35"/>
    </location>
</feature>
<feature type="transmembrane region" description="Helical" evidence="1">
    <location>
        <begin position="5"/>
        <end position="25"/>
    </location>
</feature>
<dbReference type="EMBL" id="DQ396875">
    <property type="protein sequence ID" value="ABD48279.1"/>
    <property type="molecule type" value="Genomic_DNA"/>
</dbReference>
<dbReference type="RefSeq" id="YP_635996.1">
    <property type="nucleotide sequence ID" value="NC_008101.1"/>
</dbReference>
<dbReference type="SMR" id="Q1KVS8"/>
<dbReference type="GeneID" id="4099788"/>
<dbReference type="GO" id="GO:0009535">
    <property type="term" value="C:chloroplast thylakoid membrane"/>
    <property type="evidence" value="ECO:0007669"/>
    <property type="project" value="UniProtKB-SubCell"/>
</dbReference>
<dbReference type="GO" id="GO:0009523">
    <property type="term" value="C:photosystem II"/>
    <property type="evidence" value="ECO:0007669"/>
    <property type="project" value="UniProtKB-KW"/>
</dbReference>
<dbReference type="GO" id="GO:0019684">
    <property type="term" value="P:photosynthesis, light reaction"/>
    <property type="evidence" value="ECO:0007669"/>
    <property type="project" value="InterPro"/>
</dbReference>
<dbReference type="HAMAP" id="MF_00438">
    <property type="entry name" value="PSII_PsbM"/>
    <property type="match status" value="1"/>
</dbReference>
<dbReference type="InterPro" id="IPR007826">
    <property type="entry name" value="PSII_PsbM"/>
</dbReference>
<dbReference type="InterPro" id="IPR037269">
    <property type="entry name" value="PSII_PsbM_sf"/>
</dbReference>
<dbReference type="NCBIfam" id="TIGR03038">
    <property type="entry name" value="PS_II_psbM"/>
    <property type="match status" value="1"/>
</dbReference>
<dbReference type="PANTHER" id="PTHR35774">
    <property type="entry name" value="PHOTOSYSTEM II REACTION CENTER PROTEIN M"/>
    <property type="match status" value="1"/>
</dbReference>
<dbReference type="PANTHER" id="PTHR35774:SF1">
    <property type="entry name" value="PHOTOSYSTEM II REACTION CENTER PROTEIN M"/>
    <property type="match status" value="1"/>
</dbReference>
<dbReference type="Pfam" id="PF05151">
    <property type="entry name" value="PsbM"/>
    <property type="match status" value="1"/>
</dbReference>
<dbReference type="SUPFAM" id="SSF161033">
    <property type="entry name" value="Photosystem II reaction center protein M, PsbM"/>
    <property type="match status" value="1"/>
</dbReference>
<gene>
    <name evidence="1" type="primary">psbM</name>
</gene>
<organism>
    <name type="scientific">Tetradesmus obliquus</name>
    <name type="common">Green alga</name>
    <name type="synonym">Acutodesmus obliquus</name>
    <dbReference type="NCBI Taxonomy" id="3088"/>
    <lineage>
        <taxon>Eukaryota</taxon>
        <taxon>Viridiplantae</taxon>
        <taxon>Chlorophyta</taxon>
        <taxon>core chlorophytes</taxon>
        <taxon>Chlorophyceae</taxon>
        <taxon>CS clade</taxon>
        <taxon>Sphaeropleales</taxon>
        <taxon>Scenedesmaceae</taxon>
        <taxon>Tetradesmus</taxon>
    </lineage>
</organism>
<comment type="function">
    <text evidence="1">One of the components of the core complex of photosystem II (PSII). PSII is a light-driven water:plastoquinone oxidoreductase that uses light energy to abstract electrons from H(2)O, generating O(2) and a proton gradient subsequently used for ATP formation. It consists of a core antenna complex that captures photons, and an electron transfer chain that converts photonic excitation into a charge separation. This subunit is found at the monomer-monomer interface.</text>
</comment>
<comment type="subunit">
    <text evidence="1">PSII is composed of 1 copy each of membrane proteins PsbA, PsbB, PsbC, PsbD, PsbE, PsbF, PsbH, PsbI, PsbJ, PsbK, PsbL, PsbM, PsbT, PsbX, PsbY, PsbZ, Psb30/Ycf12, at least 3 peripheral proteins of the oxygen-evolving complex and a large number of cofactors. It forms dimeric complexes.</text>
</comment>
<comment type="subcellular location">
    <subcellularLocation>
        <location evidence="1">Plastid</location>
        <location evidence="1">Chloroplast thylakoid membrane</location>
        <topology evidence="1">Single-pass membrane protein</topology>
    </subcellularLocation>
</comment>
<comment type="similarity">
    <text evidence="1">Belongs to the PsbM family.</text>
</comment>
<reference key="1">
    <citation type="journal article" date="2006" name="BMC Evol. Biol.">
        <title>The complete chloroplast genome sequence of the chlorophycean green alga Scenedesmus obliquus reveals a compact gene organization and a biased distribution of genes on the two DNA strands.</title>
        <authorList>
            <person name="de Cambiaire J.-C."/>
            <person name="Otis C."/>
            <person name="Lemieux C."/>
            <person name="Turmel M."/>
        </authorList>
    </citation>
    <scope>NUCLEOTIDE SEQUENCE [LARGE SCALE GENOMIC DNA]</scope>
    <source>
        <strain>UTEX 393</strain>
    </source>
</reference>
<sequence>MEVNIFGLTATALFIIIPTSFLLILYVKTASNQSV</sequence>